<sequence length="158" mass="17376">MSETMQSLDQLSALKTTQPDAPTYTKKVDKFGRAYATGKRKDAVARVWIKPGAGKVIVNSREVEVYFARPVLRMMIQQPLVAAARAGQYDVICTVAGGGLSGQAGAVRHGISKALTNFEPELRGVLKKGGFLTRDSRVVERKKYGKAKARRSFQFSKR</sequence>
<keyword id="KW-1185">Reference proteome</keyword>
<keyword id="KW-0687">Ribonucleoprotein</keyword>
<keyword id="KW-0689">Ribosomal protein</keyword>
<dbReference type="EMBL" id="CP000250">
    <property type="protein sequence ID" value="ABD07374.1"/>
    <property type="molecule type" value="Genomic_DNA"/>
</dbReference>
<dbReference type="RefSeq" id="WP_011441559.1">
    <property type="nucleotide sequence ID" value="NC_007778.1"/>
</dbReference>
<dbReference type="SMR" id="Q2IWN6"/>
<dbReference type="STRING" id="316058.RPB_2672"/>
<dbReference type="KEGG" id="rpb:RPB_2672"/>
<dbReference type="eggNOG" id="COG0103">
    <property type="taxonomic scope" value="Bacteria"/>
</dbReference>
<dbReference type="HOGENOM" id="CLU_046483_2_0_5"/>
<dbReference type="OrthoDB" id="9803965at2"/>
<dbReference type="Proteomes" id="UP000008809">
    <property type="component" value="Chromosome"/>
</dbReference>
<dbReference type="GO" id="GO:0022627">
    <property type="term" value="C:cytosolic small ribosomal subunit"/>
    <property type="evidence" value="ECO:0007669"/>
    <property type="project" value="TreeGrafter"/>
</dbReference>
<dbReference type="GO" id="GO:0003723">
    <property type="term" value="F:RNA binding"/>
    <property type="evidence" value="ECO:0007669"/>
    <property type="project" value="TreeGrafter"/>
</dbReference>
<dbReference type="GO" id="GO:0003735">
    <property type="term" value="F:structural constituent of ribosome"/>
    <property type="evidence" value="ECO:0007669"/>
    <property type="project" value="InterPro"/>
</dbReference>
<dbReference type="GO" id="GO:0006412">
    <property type="term" value="P:translation"/>
    <property type="evidence" value="ECO:0007669"/>
    <property type="project" value="UniProtKB-UniRule"/>
</dbReference>
<dbReference type="FunFam" id="3.30.230.10:FF:000034">
    <property type="entry name" value="30S ribosomal protein S9"/>
    <property type="match status" value="1"/>
</dbReference>
<dbReference type="Gene3D" id="3.30.230.10">
    <property type="match status" value="1"/>
</dbReference>
<dbReference type="HAMAP" id="MF_00532_B">
    <property type="entry name" value="Ribosomal_uS9_B"/>
    <property type="match status" value="1"/>
</dbReference>
<dbReference type="InterPro" id="IPR020568">
    <property type="entry name" value="Ribosomal_Su5_D2-typ_SF"/>
</dbReference>
<dbReference type="InterPro" id="IPR000754">
    <property type="entry name" value="Ribosomal_uS9"/>
</dbReference>
<dbReference type="InterPro" id="IPR023035">
    <property type="entry name" value="Ribosomal_uS9_bac/plastid"/>
</dbReference>
<dbReference type="InterPro" id="IPR020574">
    <property type="entry name" value="Ribosomal_uS9_CS"/>
</dbReference>
<dbReference type="InterPro" id="IPR014721">
    <property type="entry name" value="Ribsml_uS5_D2-typ_fold_subgr"/>
</dbReference>
<dbReference type="NCBIfam" id="NF001099">
    <property type="entry name" value="PRK00132.1"/>
    <property type="match status" value="1"/>
</dbReference>
<dbReference type="PANTHER" id="PTHR21569">
    <property type="entry name" value="RIBOSOMAL PROTEIN S9"/>
    <property type="match status" value="1"/>
</dbReference>
<dbReference type="PANTHER" id="PTHR21569:SF1">
    <property type="entry name" value="SMALL RIBOSOMAL SUBUNIT PROTEIN US9M"/>
    <property type="match status" value="1"/>
</dbReference>
<dbReference type="Pfam" id="PF00380">
    <property type="entry name" value="Ribosomal_S9"/>
    <property type="match status" value="1"/>
</dbReference>
<dbReference type="SUPFAM" id="SSF54211">
    <property type="entry name" value="Ribosomal protein S5 domain 2-like"/>
    <property type="match status" value="1"/>
</dbReference>
<dbReference type="PROSITE" id="PS00360">
    <property type="entry name" value="RIBOSOMAL_S9"/>
    <property type="match status" value="1"/>
</dbReference>
<proteinExistence type="inferred from homology"/>
<reference key="1">
    <citation type="submission" date="2006-01" db="EMBL/GenBank/DDBJ databases">
        <title>Complete sequence of Rhodopseudomonas palustris HaA2.</title>
        <authorList>
            <consortium name="US DOE Joint Genome Institute"/>
            <person name="Copeland A."/>
            <person name="Lucas S."/>
            <person name="Lapidus A."/>
            <person name="Barry K."/>
            <person name="Detter J.C."/>
            <person name="Glavina T."/>
            <person name="Hammon N."/>
            <person name="Israni S."/>
            <person name="Pitluck S."/>
            <person name="Chain P."/>
            <person name="Malfatti S."/>
            <person name="Shin M."/>
            <person name="Vergez L."/>
            <person name="Schmutz J."/>
            <person name="Larimer F."/>
            <person name="Land M."/>
            <person name="Hauser L."/>
            <person name="Pelletier D.A."/>
            <person name="Kyrpides N."/>
            <person name="Anderson I."/>
            <person name="Oda Y."/>
            <person name="Harwood C.S."/>
            <person name="Richardson P."/>
        </authorList>
    </citation>
    <scope>NUCLEOTIDE SEQUENCE [LARGE SCALE GENOMIC DNA]</scope>
    <source>
        <strain>HaA2</strain>
    </source>
</reference>
<feature type="chain" id="PRO_1000051306" description="Small ribosomal subunit protein uS9">
    <location>
        <begin position="1"/>
        <end position="158"/>
    </location>
</feature>
<protein>
    <recommendedName>
        <fullName evidence="1">Small ribosomal subunit protein uS9</fullName>
    </recommendedName>
    <alternativeName>
        <fullName evidence="2">30S ribosomal protein S9</fullName>
    </alternativeName>
</protein>
<organism>
    <name type="scientific">Rhodopseudomonas palustris (strain HaA2)</name>
    <dbReference type="NCBI Taxonomy" id="316058"/>
    <lineage>
        <taxon>Bacteria</taxon>
        <taxon>Pseudomonadati</taxon>
        <taxon>Pseudomonadota</taxon>
        <taxon>Alphaproteobacteria</taxon>
        <taxon>Hyphomicrobiales</taxon>
        <taxon>Nitrobacteraceae</taxon>
        <taxon>Rhodopseudomonas</taxon>
    </lineage>
</organism>
<comment type="similarity">
    <text evidence="1">Belongs to the universal ribosomal protein uS9 family.</text>
</comment>
<gene>
    <name evidence="1" type="primary">rpsI</name>
    <name type="ordered locus">RPB_2672</name>
</gene>
<evidence type="ECO:0000255" key="1">
    <source>
        <dbReference type="HAMAP-Rule" id="MF_00532"/>
    </source>
</evidence>
<evidence type="ECO:0000305" key="2"/>
<name>RS9_RHOP2</name>
<accession>Q2IWN6</accession>